<evidence type="ECO:0000250" key="1">
    <source>
        <dbReference type="UniProtKB" id="P0A988"/>
    </source>
</evidence>
<evidence type="ECO:0000305" key="2"/>
<accession>Q9PKW4</accession>
<keyword id="KW-0963">Cytoplasm</keyword>
<keyword id="KW-0235">DNA replication</keyword>
<keyword id="KW-0238">DNA-binding</keyword>
<keyword id="KW-0239">DNA-directed DNA polymerase</keyword>
<keyword id="KW-0548">Nucleotidyltransferase</keyword>
<keyword id="KW-0808">Transferase</keyword>
<protein>
    <recommendedName>
        <fullName>Beta sliding clamp</fullName>
        <shortName>Beta clamp</shortName>
        <shortName>Sliding clamp</shortName>
    </recommendedName>
    <alternativeName>
        <fullName>Beta-clamp processivity factor</fullName>
    </alternativeName>
    <alternativeName>
        <fullName>DNA polymerase III beta sliding clamp subunit</fullName>
    </alternativeName>
    <alternativeName>
        <fullName>DNA polymerase III subunit beta</fullName>
    </alternativeName>
</protein>
<feature type="chain" id="PRO_0000105431" description="Beta sliding clamp">
    <location>
        <begin position="1"/>
        <end position="366"/>
    </location>
</feature>
<name>DPO3B_CHLMU</name>
<proteinExistence type="inferred from homology"/>
<gene>
    <name type="primary">dnaN</name>
    <name type="ordered locus">TC_0347</name>
</gene>
<organism>
    <name type="scientific">Chlamydia muridarum (strain MoPn / Nigg)</name>
    <dbReference type="NCBI Taxonomy" id="243161"/>
    <lineage>
        <taxon>Bacteria</taxon>
        <taxon>Pseudomonadati</taxon>
        <taxon>Chlamydiota</taxon>
        <taxon>Chlamydiia</taxon>
        <taxon>Chlamydiales</taxon>
        <taxon>Chlamydiaceae</taxon>
        <taxon>Chlamydia/Chlamydophila group</taxon>
        <taxon>Chlamydia</taxon>
    </lineage>
</organism>
<comment type="function">
    <text evidence="1">Confers DNA tethering and processivity to DNA polymerases and other proteins. Acts as a clamp, forming a ring around DNA (a reaction catalyzed by the clamp-loading complex) which diffuses in an ATP-independent manner freely and bidirectionally along dsDNA. Initially characterized for its ability to contact the catalytic subunit of DNA polymerase III (Pol III), a complex, multichain enzyme responsible for most of the replicative synthesis in bacteria; Pol III exhibits 3'-5' exonuclease proofreading activity. The beta chain is required for initiation of replication as well as for processivity of DNA replication.</text>
</comment>
<comment type="subunit">
    <text evidence="1">Forms a ring-shaped head-to-tail homodimer around DNA which binds and tethers DNA polymerases and other proteins to the DNA. The DNA replisome complex has a single clamp-loading complex (3 tau and 1 each of delta, delta', psi and chi subunits) which binds 3 Pol III cores (1 core on the leading strand and 2 on the lagging strand) each with a beta sliding clamp dimer. Additional proteins in the replisome are other copies of gamma, psi and chi, Ssb, DNA helicase and RNA primase.</text>
</comment>
<comment type="subcellular location">
    <subcellularLocation>
        <location evidence="1">Cytoplasm</location>
    </subcellularLocation>
</comment>
<comment type="similarity">
    <text evidence="2">Belongs to the beta sliding clamp family.</text>
</comment>
<sequence>MKFVISRNELGNLIKKVQNVVPQSTPIPVLTHVLIESCNDELVFTATDLTVSTRCVVKAKVYESGSVTIPSRRFFQLIRELTEANIEVAANSGEMATITSGSSCFRLLSMGKEDFPMLPDMQNALRFTLDSEQLKDMFQRTSFAVSREESRYVLTGVLLSISNGTMTVVGTDGKRLAKIDTNISLDPSFSGDYIIPIKAVEEIIRMASEDVQSTIFLDQTKIAVECGNTLLVTKLLSGEFPDFSPVISTQSSVQLNLHREELISLLKQVALFTNESSHSVKFSFSPGELTLTANCTKVGEGKVSMAVNYTGETLEIAFNPFFFLDILKHSRDELVQLGISDSYNPGIITDSTRSLFVIMPMRLHDD</sequence>
<dbReference type="EMBL" id="AE002160">
    <property type="protein sequence ID" value="AAF39208.1"/>
    <property type="molecule type" value="Genomic_DNA"/>
</dbReference>
<dbReference type="PIR" id="C81713">
    <property type="entry name" value="C81713"/>
</dbReference>
<dbReference type="RefSeq" id="WP_010230225.1">
    <property type="nucleotide sequence ID" value="NZ_CP063055.1"/>
</dbReference>
<dbReference type="SMR" id="Q9PKW4"/>
<dbReference type="GeneID" id="1246390"/>
<dbReference type="KEGG" id="cmu:TC_0347"/>
<dbReference type="eggNOG" id="COG0592">
    <property type="taxonomic scope" value="Bacteria"/>
</dbReference>
<dbReference type="HOGENOM" id="CLU_038149_4_0_0"/>
<dbReference type="OrthoDB" id="8421503at2"/>
<dbReference type="Proteomes" id="UP000000800">
    <property type="component" value="Chromosome"/>
</dbReference>
<dbReference type="GO" id="GO:0005737">
    <property type="term" value="C:cytoplasm"/>
    <property type="evidence" value="ECO:0007669"/>
    <property type="project" value="UniProtKB-SubCell"/>
</dbReference>
<dbReference type="GO" id="GO:0009360">
    <property type="term" value="C:DNA polymerase III complex"/>
    <property type="evidence" value="ECO:0007669"/>
    <property type="project" value="InterPro"/>
</dbReference>
<dbReference type="GO" id="GO:0008408">
    <property type="term" value="F:3'-5' exonuclease activity"/>
    <property type="evidence" value="ECO:0007669"/>
    <property type="project" value="InterPro"/>
</dbReference>
<dbReference type="GO" id="GO:0003677">
    <property type="term" value="F:DNA binding"/>
    <property type="evidence" value="ECO:0007669"/>
    <property type="project" value="UniProtKB-KW"/>
</dbReference>
<dbReference type="GO" id="GO:0003887">
    <property type="term" value="F:DNA-directed DNA polymerase activity"/>
    <property type="evidence" value="ECO:0007669"/>
    <property type="project" value="UniProtKB-KW"/>
</dbReference>
<dbReference type="GO" id="GO:0006271">
    <property type="term" value="P:DNA strand elongation involved in DNA replication"/>
    <property type="evidence" value="ECO:0007669"/>
    <property type="project" value="TreeGrafter"/>
</dbReference>
<dbReference type="CDD" id="cd00140">
    <property type="entry name" value="beta_clamp"/>
    <property type="match status" value="1"/>
</dbReference>
<dbReference type="Gene3D" id="3.70.10.10">
    <property type="match status" value="1"/>
</dbReference>
<dbReference type="Gene3D" id="3.10.150.10">
    <property type="entry name" value="DNA Polymerase III, subunit A, domain 2"/>
    <property type="match status" value="1"/>
</dbReference>
<dbReference type="InterPro" id="IPR046938">
    <property type="entry name" value="DNA_clamp_sf"/>
</dbReference>
<dbReference type="InterPro" id="IPR001001">
    <property type="entry name" value="DNA_polIII_beta"/>
</dbReference>
<dbReference type="InterPro" id="IPR022635">
    <property type="entry name" value="DNA_polIII_beta_C"/>
</dbReference>
<dbReference type="InterPro" id="IPR022637">
    <property type="entry name" value="DNA_polIII_beta_cen"/>
</dbReference>
<dbReference type="InterPro" id="IPR022634">
    <property type="entry name" value="DNA_polIII_beta_N"/>
</dbReference>
<dbReference type="NCBIfam" id="TIGR00663">
    <property type="entry name" value="dnan"/>
    <property type="match status" value="1"/>
</dbReference>
<dbReference type="PANTHER" id="PTHR30478:SF0">
    <property type="entry name" value="BETA SLIDING CLAMP"/>
    <property type="match status" value="1"/>
</dbReference>
<dbReference type="PANTHER" id="PTHR30478">
    <property type="entry name" value="DNA POLYMERASE III SUBUNIT BETA"/>
    <property type="match status" value="1"/>
</dbReference>
<dbReference type="Pfam" id="PF00712">
    <property type="entry name" value="DNA_pol3_beta"/>
    <property type="match status" value="1"/>
</dbReference>
<dbReference type="Pfam" id="PF02767">
    <property type="entry name" value="DNA_pol3_beta_2"/>
    <property type="match status" value="1"/>
</dbReference>
<dbReference type="Pfam" id="PF02768">
    <property type="entry name" value="DNA_pol3_beta_3"/>
    <property type="match status" value="1"/>
</dbReference>
<dbReference type="PIRSF" id="PIRSF000804">
    <property type="entry name" value="DNA_pol_III_b"/>
    <property type="match status" value="1"/>
</dbReference>
<dbReference type="SMART" id="SM00480">
    <property type="entry name" value="POL3Bc"/>
    <property type="match status" value="1"/>
</dbReference>
<dbReference type="SUPFAM" id="SSF55979">
    <property type="entry name" value="DNA clamp"/>
    <property type="match status" value="3"/>
</dbReference>
<reference key="1">
    <citation type="journal article" date="2000" name="Nucleic Acids Res.">
        <title>Genome sequences of Chlamydia trachomatis MoPn and Chlamydia pneumoniae AR39.</title>
        <authorList>
            <person name="Read T.D."/>
            <person name="Brunham R.C."/>
            <person name="Shen C."/>
            <person name="Gill S.R."/>
            <person name="Heidelberg J.F."/>
            <person name="White O."/>
            <person name="Hickey E.K."/>
            <person name="Peterson J.D."/>
            <person name="Utterback T.R."/>
            <person name="Berry K.J."/>
            <person name="Bass S."/>
            <person name="Linher K.D."/>
            <person name="Weidman J.F."/>
            <person name="Khouri H.M."/>
            <person name="Craven B."/>
            <person name="Bowman C."/>
            <person name="Dodson R.J."/>
            <person name="Gwinn M.L."/>
            <person name="Nelson W.C."/>
            <person name="DeBoy R.T."/>
            <person name="Kolonay J.F."/>
            <person name="McClarty G."/>
            <person name="Salzberg S.L."/>
            <person name="Eisen J.A."/>
            <person name="Fraser C.M."/>
        </authorList>
    </citation>
    <scope>NUCLEOTIDE SEQUENCE [LARGE SCALE GENOMIC DNA]</scope>
    <source>
        <strain>MoPn / Nigg</strain>
    </source>
</reference>